<accession>Q7Y1Z1</accession>
<accession>A0A0N7KKQ9</accession>
<comment type="function">
    <text evidence="3">Hydrolyzes chitin and may play a role in defense against fungal pathogens containing chitin.</text>
</comment>
<comment type="catalytic activity">
    <reaction evidence="3">
        <text>Random endo-hydrolysis of N-acetyl-beta-D-glucosaminide (1-&gt;4)-beta-linkages in chitin and chitodextrins.</text>
        <dbReference type="EC" id="3.2.1.14"/>
    </reaction>
</comment>
<comment type="tissue specificity">
    <text evidence="3">Expressed in pistils, stamens and lodicules.</text>
</comment>
<comment type="similarity">
    <text evidence="4">Belongs to the glycosyl hydrolase 19 family. Chitinase class I subfamily.</text>
</comment>
<comment type="caution">
    <text evidence="3 4">Enzyme activity is uncertain. Was shown to have endochitinase activity (in vitro) (PubMed:10890535). Lacks the conserved Glu residue that is essential for catalytic activity, suggesting it lacks enzyme activity.</text>
</comment>
<gene>
    <name type="primary">Cht7</name>
    <name type="synonym">PC</name>
    <name type="ordered locus">Os05g0399700</name>
    <name type="ordered locus">LOC_Os05g33150</name>
    <name type="ORF">OSJNBa0035J16.1</name>
    <name type="ORF">P0605G01.16</name>
</gene>
<dbReference type="EC" id="3.2.1.14" evidence="3"/>
<dbReference type="EMBL" id="AB096139">
    <property type="protein sequence ID" value="BAC76690.1"/>
    <property type="molecule type" value="mRNA"/>
</dbReference>
<dbReference type="EMBL" id="AC132492">
    <property type="protein sequence ID" value="AAU10808.1"/>
    <property type="molecule type" value="Genomic_DNA"/>
</dbReference>
<dbReference type="EMBL" id="AC135418">
    <property type="protein sequence ID" value="AAT85136.1"/>
    <property type="molecule type" value="Genomic_DNA"/>
</dbReference>
<dbReference type="EMBL" id="AP008211">
    <property type="protein sequence ID" value="BAF17392.1"/>
    <property type="molecule type" value="Genomic_DNA"/>
</dbReference>
<dbReference type="EMBL" id="AP014961">
    <property type="protein sequence ID" value="BAS93905.1"/>
    <property type="molecule type" value="Genomic_DNA"/>
</dbReference>
<dbReference type="EMBL" id="AK071196">
    <property type="protein sequence ID" value="BAG92366.1"/>
    <property type="molecule type" value="mRNA"/>
</dbReference>
<dbReference type="RefSeq" id="XP_015640431.1">
    <property type="nucleotide sequence ID" value="XM_015784945.1"/>
</dbReference>
<dbReference type="SMR" id="Q7Y1Z1"/>
<dbReference type="FunCoup" id="Q7Y1Z1">
    <property type="interactions" value="252"/>
</dbReference>
<dbReference type="STRING" id="39947.Q7Y1Z1"/>
<dbReference type="CAZy" id="CBM18">
    <property type="family name" value="Carbohydrate-Binding Module Family 18"/>
</dbReference>
<dbReference type="CAZy" id="GH19">
    <property type="family name" value="Glycoside Hydrolase Family 19"/>
</dbReference>
<dbReference type="PaxDb" id="39947-Q7Y1Z1"/>
<dbReference type="EnsemblPlants" id="Os05t0399700-01">
    <property type="protein sequence ID" value="Os05t0399700-01"/>
    <property type="gene ID" value="Os05g0399700"/>
</dbReference>
<dbReference type="Gramene" id="Os05t0399700-01">
    <property type="protein sequence ID" value="Os05t0399700-01"/>
    <property type="gene ID" value="Os05g0399700"/>
</dbReference>
<dbReference type="KEGG" id="dosa:Os05g0399700"/>
<dbReference type="eggNOG" id="KOG4742">
    <property type="taxonomic scope" value="Eukaryota"/>
</dbReference>
<dbReference type="HOGENOM" id="CLU_045506_1_0_1"/>
<dbReference type="InParanoid" id="Q7Y1Z1"/>
<dbReference type="OMA" id="CRGANND"/>
<dbReference type="OrthoDB" id="649016at2759"/>
<dbReference type="Proteomes" id="UP000000763">
    <property type="component" value="Chromosome 5"/>
</dbReference>
<dbReference type="Proteomes" id="UP000059680">
    <property type="component" value="Chromosome 5"/>
</dbReference>
<dbReference type="ExpressionAtlas" id="Q7Y1Z1">
    <property type="expression patterns" value="baseline and differential"/>
</dbReference>
<dbReference type="GO" id="GO:0008061">
    <property type="term" value="F:chitin binding"/>
    <property type="evidence" value="ECO:0007669"/>
    <property type="project" value="UniProtKB-KW"/>
</dbReference>
<dbReference type="GO" id="GO:0004568">
    <property type="term" value="F:chitinase activity"/>
    <property type="evidence" value="ECO:0000318"/>
    <property type="project" value="GO_Central"/>
</dbReference>
<dbReference type="GO" id="GO:0008843">
    <property type="term" value="F:endochitinase activity"/>
    <property type="evidence" value="ECO:0007669"/>
    <property type="project" value="UniProtKB-EC"/>
</dbReference>
<dbReference type="GO" id="GO:0016998">
    <property type="term" value="P:cell wall macromolecule catabolic process"/>
    <property type="evidence" value="ECO:0007669"/>
    <property type="project" value="InterPro"/>
</dbReference>
<dbReference type="GO" id="GO:0006032">
    <property type="term" value="P:chitin catabolic process"/>
    <property type="evidence" value="ECO:0007669"/>
    <property type="project" value="UniProtKB-KW"/>
</dbReference>
<dbReference type="GO" id="GO:0050832">
    <property type="term" value="P:defense response to fungus"/>
    <property type="evidence" value="ECO:0000318"/>
    <property type="project" value="GO_Central"/>
</dbReference>
<dbReference type="GO" id="GO:0000272">
    <property type="term" value="P:polysaccharide catabolic process"/>
    <property type="evidence" value="ECO:0007669"/>
    <property type="project" value="UniProtKB-KW"/>
</dbReference>
<dbReference type="CDD" id="cd00325">
    <property type="entry name" value="chitinase_GH19"/>
    <property type="match status" value="1"/>
</dbReference>
<dbReference type="CDD" id="cd06921">
    <property type="entry name" value="ChtBD1_GH19_hevein"/>
    <property type="match status" value="1"/>
</dbReference>
<dbReference type="FunFam" id="3.30.60.10:FF:000001">
    <property type="entry name" value="Basic endochitinase"/>
    <property type="match status" value="1"/>
</dbReference>
<dbReference type="FunFam" id="3.30.20.10:FF:000001">
    <property type="entry name" value="Endochitinase (Chitinase)"/>
    <property type="match status" value="1"/>
</dbReference>
<dbReference type="Gene3D" id="1.10.530.10">
    <property type="match status" value="1"/>
</dbReference>
<dbReference type="Gene3D" id="3.30.20.10">
    <property type="entry name" value="Endochitinase, domain 2"/>
    <property type="match status" value="1"/>
</dbReference>
<dbReference type="Gene3D" id="3.30.60.10">
    <property type="entry name" value="Endochitinase-like"/>
    <property type="match status" value="1"/>
</dbReference>
<dbReference type="InterPro" id="IPR001002">
    <property type="entry name" value="Chitin-bd_1"/>
</dbReference>
<dbReference type="InterPro" id="IPR018371">
    <property type="entry name" value="Chitin-binding_1_CS"/>
</dbReference>
<dbReference type="InterPro" id="IPR036861">
    <property type="entry name" value="Endochitinase-like_sf"/>
</dbReference>
<dbReference type="InterPro" id="IPR016283">
    <property type="entry name" value="Glyco_hydro_19"/>
</dbReference>
<dbReference type="InterPro" id="IPR000726">
    <property type="entry name" value="Glyco_hydro_19_cat"/>
</dbReference>
<dbReference type="InterPro" id="IPR023346">
    <property type="entry name" value="Lysozyme-like_dom_sf"/>
</dbReference>
<dbReference type="PANTHER" id="PTHR22595:SF79">
    <property type="entry name" value="CHITINASE 12"/>
    <property type="match status" value="1"/>
</dbReference>
<dbReference type="PANTHER" id="PTHR22595">
    <property type="entry name" value="CHITINASE-RELATED"/>
    <property type="match status" value="1"/>
</dbReference>
<dbReference type="Pfam" id="PF00187">
    <property type="entry name" value="Chitin_bind_1"/>
    <property type="match status" value="1"/>
</dbReference>
<dbReference type="Pfam" id="PF00182">
    <property type="entry name" value="Glyco_hydro_19"/>
    <property type="match status" value="1"/>
</dbReference>
<dbReference type="PIRSF" id="PIRSF001060">
    <property type="entry name" value="Endochitinase"/>
    <property type="match status" value="1"/>
</dbReference>
<dbReference type="PRINTS" id="PR00451">
    <property type="entry name" value="CHITINBINDNG"/>
</dbReference>
<dbReference type="SMART" id="SM00270">
    <property type="entry name" value="ChtBD1"/>
    <property type="match status" value="1"/>
</dbReference>
<dbReference type="SUPFAM" id="SSF53955">
    <property type="entry name" value="Lysozyme-like"/>
    <property type="match status" value="1"/>
</dbReference>
<dbReference type="SUPFAM" id="SSF57016">
    <property type="entry name" value="Plant lectins/antimicrobial peptides"/>
    <property type="match status" value="1"/>
</dbReference>
<dbReference type="PROSITE" id="PS00026">
    <property type="entry name" value="CHIT_BIND_I_1"/>
    <property type="match status" value="1"/>
</dbReference>
<dbReference type="PROSITE" id="PS50941">
    <property type="entry name" value="CHIT_BIND_I_2"/>
    <property type="match status" value="1"/>
</dbReference>
<organism>
    <name type="scientific">Oryza sativa subsp. japonica</name>
    <name type="common">Rice</name>
    <dbReference type="NCBI Taxonomy" id="39947"/>
    <lineage>
        <taxon>Eukaryota</taxon>
        <taxon>Viridiplantae</taxon>
        <taxon>Streptophyta</taxon>
        <taxon>Embryophyta</taxon>
        <taxon>Tracheophyta</taxon>
        <taxon>Spermatophyta</taxon>
        <taxon>Magnoliopsida</taxon>
        <taxon>Liliopsida</taxon>
        <taxon>Poales</taxon>
        <taxon>Poaceae</taxon>
        <taxon>BOP clade</taxon>
        <taxon>Oryzoideae</taxon>
        <taxon>Oryzeae</taxon>
        <taxon>Oryzinae</taxon>
        <taxon>Oryza</taxon>
        <taxon>Oryza sativa</taxon>
    </lineage>
</organism>
<proteinExistence type="evidence at protein level"/>
<reference key="1">
    <citation type="journal article" date="2003" name="Biosci. Biotechnol. Biochem.">
        <title>Structure, heterologous expression, and properties of rice (Oryza sativa L.) family 19 chitinases.</title>
        <authorList>
            <person name="Truong N.-H."/>
            <person name="Park S.-M."/>
            <person name="Nishizawa Y."/>
            <person name="Watanabe T."/>
            <person name="Sasaki T."/>
            <person name="Itoh Y."/>
        </authorList>
    </citation>
    <scope>NUCLEOTIDE SEQUENCE [MRNA]</scope>
    <source>
        <strain>cv. Nipponbare</strain>
    </source>
</reference>
<reference key="2">
    <citation type="journal article" date="2005" name="Mol. Genet. Genomics">
        <title>A fine physical map of the rice chromosome 5.</title>
        <authorList>
            <person name="Cheng C.-H."/>
            <person name="Chung M.C."/>
            <person name="Liu S.-M."/>
            <person name="Chen S.-K."/>
            <person name="Kao F.Y."/>
            <person name="Lin S.-J."/>
            <person name="Hsiao S.-H."/>
            <person name="Tseng I.C."/>
            <person name="Hsing Y.-I.C."/>
            <person name="Wu H.-P."/>
            <person name="Chen C.-S."/>
            <person name="Shaw J.-F."/>
            <person name="Wu J."/>
            <person name="Matsumoto T."/>
            <person name="Sasaki T."/>
            <person name="Chen H.-C."/>
            <person name="Chow T.-Y."/>
        </authorList>
    </citation>
    <scope>NUCLEOTIDE SEQUENCE [LARGE SCALE GENOMIC DNA]</scope>
    <source>
        <strain>cv. Nipponbare</strain>
    </source>
</reference>
<reference key="3">
    <citation type="journal article" date="2005" name="Nature">
        <title>The map-based sequence of the rice genome.</title>
        <authorList>
            <consortium name="International rice genome sequencing project (IRGSP)"/>
        </authorList>
    </citation>
    <scope>NUCLEOTIDE SEQUENCE [LARGE SCALE GENOMIC DNA]</scope>
    <source>
        <strain>cv. Nipponbare</strain>
    </source>
</reference>
<reference key="4">
    <citation type="journal article" date="2008" name="Nucleic Acids Res.">
        <title>The rice annotation project database (RAP-DB): 2008 update.</title>
        <authorList>
            <consortium name="The rice annotation project (RAP)"/>
        </authorList>
    </citation>
    <scope>GENOME REANNOTATION</scope>
    <source>
        <strain>cv. Nipponbare</strain>
    </source>
</reference>
<reference key="5">
    <citation type="journal article" date="2013" name="Rice">
        <title>Improvement of the Oryza sativa Nipponbare reference genome using next generation sequence and optical map data.</title>
        <authorList>
            <person name="Kawahara Y."/>
            <person name="de la Bastide M."/>
            <person name="Hamilton J.P."/>
            <person name="Kanamori H."/>
            <person name="McCombie W.R."/>
            <person name="Ouyang S."/>
            <person name="Schwartz D.C."/>
            <person name="Tanaka T."/>
            <person name="Wu J."/>
            <person name="Zhou S."/>
            <person name="Childs K.L."/>
            <person name="Davidson R.M."/>
            <person name="Lin H."/>
            <person name="Quesada-Ocampo L."/>
            <person name="Vaillancourt B."/>
            <person name="Sakai H."/>
            <person name="Lee S.S."/>
            <person name="Kim J."/>
            <person name="Numa H."/>
            <person name="Itoh T."/>
            <person name="Buell C.R."/>
            <person name="Matsumoto T."/>
        </authorList>
    </citation>
    <scope>GENOME REANNOTATION</scope>
    <source>
        <strain>cv. Nipponbare</strain>
    </source>
</reference>
<reference key="6">
    <citation type="journal article" date="2003" name="Science">
        <title>Collection, mapping, and annotation of over 28,000 cDNA clones from japonica rice.</title>
        <authorList>
            <consortium name="The rice full-length cDNA consortium"/>
        </authorList>
    </citation>
    <scope>NUCLEOTIDE SEQUENCE [LARGE SCALE MRNA]</scope>
    <source>
        <strain>cv. Nipponbare</strain>
    </source>
</reference>
<reference key="7">
    <citation type="journal article" date="2000" name="Plant Mol. Biol.">
        <title>Flower-predominant expression of a gene encoding a novel class I chitinase in rice (Oryza sativa L.).</title>
        <authorList>
            <person name="Takakura Y."/>
            <person name="Ito T."/>
            <person name="Saito H."/>
            <person name="Inoue T."/>
            <person name="Komari T."/>
            <person name="Kuwata S."/>
        </authorList>
    </citation>
    <scope>FUNCTION</scope>
    <scope>CATALYTIC ACTIVITY</scope>
    <scope>TISSUE SPECIFICITY</scope>
</reference>
<reference key="8">
    <citation type="journal article" date="2006" name="Genome">
        <title>Distribution, structure, organ-specific expression, and phylogenic analysis of the pathogenesis-related protein-3 chitinase gene family in rice (Oryza sativa L.).</title>
        <authorList>
            <person name="Nakazaki T."/>
            <person name="Tsukiyama T."/>
            <person name="Okumoto Y."/>
            <person name="Kageyama D."/>
            <person name="Naito K."/>
            <person name="Inouye K."/>
            <person name="Tanisaka T."/>
        </authorList>
    </citation>
    <scope>GENE FAMILY</scope>
    <scope>NOMENCLATURE</scope>
</reference>
<protein>
    <recommendedName>
        <fullName>Chitinase 7</fullName>
        <ecNumber evidence="3">3.2.1.14</ecNumber>
    </recommendedName>
    <alternativeName>
        <fullName>Class I chitinase d</fullName>
        <shortName>OsChia1d</shortName>
    </alternativeName>
    <alternativeName>
        <fullName>Pathogenesis related (PR)-3 chitinase 7</fullName>
    </alternativeName>
</protein>
<evidence type="ECO:0000255" key="1"/>
<evidence type="ECO:0000255" key="2">
    <source>
        <dbReference type="PROSITE-ProRule" id="PRU00261"/>
    </source>
</evidence>
<evidence type="ECO:0000269" key="3">
    <source>
    </source>
</evidence>
<evidence type="ECO:0000305" key="4"/>
<name>CHI7_ORYSJ</name>
<keyword id="KW-0119">Carbohydrate metabolism</keyword>
<keyword id="KW-0146">Chitin degradation</keyword>
<keyword id="KW-0147">Chitin-binding</keyword>
<keyword id="KW-1015">Disulfide bond</keyword>
<keyword id="KW-0326">Glycosidase</keyword>
<keyword id="KW-0378">Hydrolase</keyword>
<keyword id="KW-0611">Plant defense</keyword>
<keyword id="KW-0624">Polysaccharide degradation</keyword>
<keyword id="KW-1185">Reference proteome</keyword>
<keyword id="KW-0732">Signal</keyword>
<sequence>MIAARAANLQVAMKALALAVLALAYAAATARAEQCGRQAGGARCPNRLCCSRWGWCGLTDDYCKGGCQSQCRVSRDGGDDDVAAVLLTAPGGGRAGVASVVTSDQFERMLPHRDDAACPARGFYAYRAFVAAAGAFPAFAATGDADTRKREVAAFLAQTSHATSGGPYSWGYCYKEVKGATSDFCVPNARWPCAPGKAYHARGPMQIAYNYNYGAAGEAIGADLLGNPELVATDPTVAFKTALWLWMTARSPSQPSPHAVVTGQWTPTPADSAAGRAPGYGLTTNILTGGLQCAGGNGGADRVAFYKRYCDVLGVGYGPNLDCFGQAPFDGDIMSASAAK</sequence>
<feature type="signal peptide" evidence="1">
    <location>
        <begin position="1"/>
        <end position="32"/>
    </location>
</feature>
<feature type="chain" id="PRO_0000383466" description="Chitinase 7">
    <location>
        <begin position="33"/>
        <end position="340"/>
    </location>
</feature>
<feature type="domain" description="Chitin-binding type-1" evidence="2">
    <location>
        <begin position="33"/>
        <end position="73"/>
    </location>
</feature>
<feature type="disulfide bond" evidence="2">
    <location>
        <begin position="35"/>
        <end position="50"/>
    </location>
</feature>
<feature type="disulfide bond" evidence="2">
    <location>
        <begin position="44"/>
        <end position="56"/>
    </location>
</feature>
<feature type="disulfide bond" evidence="2">
    <location>
        <begin position="49"/>
        <end position="63"/>
    </location>
</feature>
<feature type="disulfide bond" evidence="2">
    <location>
        <begin position="67"/>
        <end position="71"/>
    </location>
</feature>
<feature type="disulfide bond" evidence="2">
    <location>
        <begin position="118"/>
        <end position="173"/>
    </location>
</feature>
<feature type="disulfide bond" evidence="2">
    <location>
        <begin position="185"/>
        <end position="193"/>
    </location>
</feature>
<feature type="disulfide bond" evidence="2">
    <location>
        <begin position="293"/>
        <end position="323"/>
    </location>
</feature>